<name>YCIU_ECO27</name>
<comment type="function">
    <text evidence="1">May act as a double-stranded DNA (dsDNA) mimic. Probably regulates the activity of a dsDNA-binding protein.</text>
</comment>
<comment type="similarity">
    <text evidence="1">Belongs to the putative dsDNA mimic protein family.</text>
</comment>
<organism>
    <name type="scientific">Escherichia coli O127:H6 (strain E2348/69 / EPEC)</name>
    <dbReference type="NCBI Taxonomy" id="574521"/>
    <lineage>
        <taxon>Bacteria</taxon>
        <taxon>Pseudomonadati</taxon>
        <taxon>Pseudomonadota</taxon>
        <taxon>Gammaproteobacteria</taxon>
        <taxon>Enterobacterales</taxon>
        <taxon>Enterobacteriaceae</taxon>
        <taxon>Escherichia</taxon>
    </lineage>
</organism>
<accession>B7UQD8</accession>
<reference key="1">
    <citation type="journal article" date="2009" name="J. Bacteriol.">
        <title>Complete genome sequence and comparative genome analysis of enteropathogenic Escherichia coli O127:H6 strain E2348/69.</title>
        <authorList>
            <person name="Iguchi A."/>
            <person name="Thomson N.R."/>
            <person name="Ogura Y."/>
            <person name="Saunders D."/>
            <person name="Ooka T."/>
            <person name="Henderson I.R."/>
            <person name="Harris D."/>
            <person name="Asadulghani M."/>
            <person name="Kurokawa K."/>
            <person name="Dean P."/>
            <person name="Kenny B."/>
            <person name="Quail M.A."/>
            <person name="Thurston S."/>
            <person name="Dougan G."/>
            <person name="Hayashi T."/>
            <person name="Parkhill J."/>
            <person name="Frankel G."/>
        </authorList>
    </citation>
    <scope>NUCLEOTIDE SEQUENCE [LARGE SCALE GENOMIC DNA]</scope>
    <source>
        <strain>E2348/69 / EPEC</strain>
    </source>
</reference>
<gene>
    <name evidence="1" type="primary">yciU</name>
    <name type="ordered locus">E2348C_1374</name>
</gene>
<feature type="chain" id="PRO_1000200443" description="Putative double-stranded DNA mimic protein YciU">
    <location>
        <begin position="1"/>
        <end position="109"/>
    </location>
</feature>
<proteinExistence type="inferred from homology"/>
<keyword id="KW-1185">Reference proteome</keyword>
<evidence type="ECO:0000255" key="1">
    <source>
        <dbReference type="HAMAP-Rule" id="MF_00680"/>
    </source>
</evidence>
<dbReference type="EMBL" id="FM180568">
    <property type="protein sequence ID" value="CAS08922.1"/>
    <property type="molecule type" value="Genomic_DNA"/>
</dbReference>
<dbReference type="RefSeq" id="WP_000366959.1">
    <property type="nucleotide sequence ID" value="NC_011601.1"/>
</dbReference>
<dbReference type="SMR" id="B7UQD8"/>
<dbReference type="KEGG" id="ecg:E2348C_1374"/>
<dbReference type="HOGENOM" id="CLU_143392_0_0_6"/>
<dbReference type="Proteomes" id="UP000008205">
    <property type="component" value="Chromosome"/>
</dbReference>
<dbReference type="Gene3D" id="3.10.450.140">
    <property type="entry name" value="dsDNA mimic, putative"/>
    <property type="match status" value="1"/>
</dbReference>
<dbReference type="HAMAP" id="MF_00680">
    <property type="entry name" value="Put_dsDNA_mimic"/>
    <property type="match status" value="1"/>
</dbReference>
<dbReference type="InterPro" id="IPR007376">
    <property type="entry name" value="dsDNA_mimic_put"/>
</dbReference>
<dbReference type="InterPro" id="IPR036763">
    <property type="entry name" value="Put_dsDNA_mimic_sf"/>
</dbReference>
<dbReference type="NCBIfam" id="NF003469">
    <property type="entry name" value="PRK05094.1"/>
    <property type="match status" value="1"/>
</dbReference>
<dbReference type="Pfam" id="PF04269">
    <property type="entry name" value="DUF440"/>
    <property type="match status" value="1"/>
</dbReference>
<dbReference type="PIRSF" id="PIRSF004916">
    <property type="entry name" value="UCP004916"/>
    <property type="match status" value="1"/>
</dbReference>
<dbReference type="SUPFAM" id="SSF102816">
    <property type="entry name" value="Putative dsDNA mimic"/>
    <property type="match status" value="1"/>
</dbReference>
<protein>
    <recommendedName>
        <fullName evidence="1">Putative double-stranded DNA mimic protein YciU</fullName>
    </recommendedName>
</protein>
<sequence>MDMDLNNRLTEDETLEQAYDIFLELAADNLDPADVLLFNLQFEERGGAELFDPAEDWQEHVDFDLNPDFFAEVVIGLADSEDGEINDVFARILLCREKDHKLCHIIWRE</sequence>